<sequence length="146" mass="16608">SGKYISWEDSCSYLQLQKYERCELAKALKKGGLADFKGYSLENWICTAFHESGYNTASTNYNPPDKSTDYGIFQINSRWWCNDYKTPRSKNTCNIDCKVLLGDDISPAIKCAKRVVSDPNGMGAWVAWKKYCKGKNLSQWTQGCKL</sequence>
<reference evidence="5" key="1">
    <citation type="journal article" date="2006" name="Comp. Biochem. Physiol.">
        <title>Purification of a lysozyme from skin secretions of Bufo andrewsi.</title>
        <authorList>
            <person name="Zhao Y."/>
            <person name="Jin Y."/>
            <person name="Lee W.-H."/>
            <person name="Zhang Y."/>
        </authorList>
    </citation>
    <scope>NUCLEOTIDE SEQUENCE [MRNA]</scope>
    <scope>PROTEIN SEQUENCE OF 17-33</scope>
    <scope>FUNCTION</scope>
    <scope>CATALYTIC ACTIVITY</scope>
    <scope>BIOPHYSICOCHEMICAL PROPERTIES</scope>
    <scope>SUBCELLULAR LOCATION</scope>
    <scope>TISSUE SPECIFICITY</scope>
    <source>
        <tissue evidence="3">Skin secretion</tissue>
    </source>
</reference>
<keyword id="KW-0044">Antibiotic</keyword>
<keyword id="KW-0929">Antimicrobial</keyword>
<keyword id="KW-0081">Bacteriolytic enzyme</keyword>
<keyword id="KW-0903">Direct protein sequencing</keyword>
<keyword id="KW-1015">Disulfide bond</keyword>
<keyword id="KW-0326">Glycosidase</keyword>
<keyword id="KW-0378">Hydrolase</keyword>
<keyword id="KW-0964">Secreted</keyword>
<keyword id="KW-0732">Signal</keyword>
<accession>P85045</accession>
<feature type="signal peptide" evidence="3">
    <location>
        <begin position="1" status="less than"/>
        <end position="16"/>
    </location>
</feature>
<feature type="chain" id="PRO_0000271190" description="Lysozyme C" evidence="3">
    <location>
        <begin position="17"/>
        <end position="146"/>
    </location>
</feature>
<feature type="domain" description="C-type lysozyme" evidence="2">
    <location>
        <begin position="17"/>
        <end position="146"/>
    </location>
</feature>
<feature type="active site" evidence="1 2">
    <location>
        <position position="51"/>
    </location>
</feature>
<feature type="active site" evidence="1 2">
    <location>
        <position position="69"/>
    </location>
</feature>
<feature type="disulfide bond" evidence="1 2">
    <location>
        <begin position="22"/>
        <end position="144"/>
    </location>
</feature>
<feature type="disulfide bond" evidence="1 2">
    <location>
        <begin position="46"/>
        <end position="132"/>
    </location>
</feature>
<feature type="disulfide bond" evidence="1 2">
    <location>
        <begin position="81"/>
        <end position="97"/>
    </location>
</feature>
<feature type="disulfide bond" evidence="1 2">
    <location>
        <begin position="93"/>
        <end position="111"/>
    </location>
</feature>
<feature type="non-terminal residue" evidence="4">
    <location>
        <position position="1"/>
    </location>
</feature>
<proteinExistence type="evidence at protein level"/>
<dbReference type="EC" id="3.2.1.17"/>
<dbReference type="SMR" id="P85045"/>
<dbReference type="GO" id="GO:0005576">
    <property type="term" value="C:extracellular region"/>
    <property type="evidence" value="ECO:0000314"/>
    <property type="project" value="UniProtKB"/>
</dbReference>
<dbReference type="GO" id="GO:0003796">
    <property type="term" value="F:lysozyme activity"/>
    <property type="evidence" value="ECO:0000314"/>
    <property type="project" value="UniProtKB"/>
</dbReference>
<dbReference type="GO" id="GO:0050829">
    <property type="term" value="P:defense response to Gram-negative bacterium"/>
    <property type="evidence" value="ECO:0000314"/>
    <property type="project" value="UniProtKB"/>
</dbReference>
<dbReference type="GO" id="GO:0050830">
    <property type="term" value="P:defense response to Gram-positive bacterium"/>
    <property type="evidence" value="ECO:0000314"/>
    <property type="project" value="UniProtKB"/>
</dbReference>
<dbReference type="GO" id="GO:0031640">
    <property type="term" value="P:killing of cells of another organism"/>
    <property type="evidence" value="ECO:0007669"/>
    <property type="project" value="UniProtKB-KW"/>
</dbReference>
<dbReference type="CDD" id="cd16897">
    <property type="entry name" value="LYZ_C"/>
    <property type="match status" value="1"/>
</dbReference>
<dbReference type="FunFam" id="1.10.530.10:FF:000001">
    <property type="entry name" value="Lysozyme C"/>
    <property type="match status" value="1"/>
</dbReference>
<dbReference type="Gene3D" id="1.10.530.10">
    <property type="match status" value="1"/>
</dbReference>
<dbReference type="InterPro" id="IPR001916">
    <property type="entry name" value="Glyco_hydro_22"/>
</dbReference>
<dbReference type="InterPro" id="IPR019799">
    <property type="entry name" value="Glyco_hydro_22_CS"/>
</dbReference>
<dbReference type="InterPro" id="IPR000974">
    <property type="entry name" value="Glyco_hydro_22_lys"/>
</dbReference>
<dbReference type="InterPro" id="IPR023346">
    <property type="entry name" value="Lysozyme-like_dom_sf"/>
</dbReference>
<dbReference type="PANTHER" id="PTHR11407">
    <property type="entry name" value="LYSOZYME C"/>
    <property type="match status" value="1"/>
</dbReference>
<dbReference type="PANTHER" id="PTHR11407:SF28">
    <property type="entry name" value="LYSOZYME C"/>
    <property type="match status" value="1"/>
</dbReference>
<dbReference type="Pfam" id="PF00062">
    <property type="entry name" value="Lys"/>
    <property type="match status" value="1"/>
</dbReference>
<dbReference type="PRINTS" id="PR00137">
    <property type="entry name" value="LYSOZYME"/>
</dbReference>
<dbReference type="PRINTS" id="PR00135">
    <property type="entry name" value="LYZLACT"/>
</dbReference>
<dbReference type="SMART" id="SM00263">
    <property type="entry name" value="LYZ1"/>
    <property type="match status" value="1"/>
</dbReference>
<dbReference type="SUPFAM" id="SSF53955">
    <property type="entry name" value="Lysozyme-like"/>
    <property type="match status" value="1"/>
</dbReference>
<dbReference type="PROSITE" id="PS00128">
    <property type="entry name" value="GLYCOSYL_HYDROL_F22_1"/>
    <property type="match status" value="1"/>
</dbReference>
<dbReference type="PROSITE" id="PS51348">
    <property type="entry name" value="GLYCOSYL_HYDROL_F22_2"/>
    <property type="match status" value="1"/>
</dbReference>
<evidence type="ECO:0000250" key="1">
    <source>
        <dbReference type="UniProtKB" id="P00702"/>
    </source>
</evidence>
<evidence type="ECO:0000255" key="2">
    <source>
        <dbReference type="PROSITE-ProRule" id="PRU00680"/>
    </source>
</evidence>
<evidence type="ECO:0000269" key="3">
    <source>
    </source>
</evidence>
<evidence type="ECO:0000303" key="4">
    <source>
    </source>
</evidence>
<evidence type="ECO:0000305" key="5"/>
<organism>
    <name type="scientific">Bufo gargarizans andrewsi</name>
    <name type="common">Andrew's toad</name>
    <name type="synonym">Bufo andrewsi</name>
    <dbReference type="NCBI Taxonomy" id="61428"/>
    <lineage>
        <taxon>Eukaryota</taxon>
        <taxon>Metazoa</taxon>
        <taxon>Chordata</taxon>
        <taxon>Craniata</taxon>
        <taxon>Vertebrata</taxon>
        <taxon>Euteleostomi</taxon>
        <taxon>Amphibia</taxon>
        <taxon>Batrachia</taxon>
        <taxon>Anura</taxon>
        <taxon>Neobatrachia</taxon>
        <taxon>Hyloidea</taxon>
        <taxon>Bufonidae</taxon>
        <taxon>Bufo</taxon>
    </lineage>
</organism>
<name>LYS_BUFGA</name>
<protein>
    <recommendedName>
        <fullName>Lysozyme C</fullName>
        <ecNumber>3.2.1.17</ecNumber>
    </recommendedName>
    <alternativeName>
        <fullName>1,4-beta-N-acetylmuramidase C</fullName>
    </alternativeName>
</protein>
<comment type="function">
    <text evidence="2 3">Lysozymes have primarily a bacteriolytic function; those in tissues and body fluids are associated with the monocyte-macrophage system and enhance the activity of immunoagents. Has antibacterial activity against the Gram-positive bacterium S.aureus and against the Gram-negative bacterium E.coli with a MIC of 1 uM and 8 uM respectively. No antifungal activity against C.albicans.</text>
</comment>
<comment type="catalytic activity">
    <reaction evidence="3">
        <text>Hydrolysis of (1-&gt;4)-beta-linkages between N-acetylmuramic acid and N-acetyl-D-glucosamine residues in a peptidoglycan and between N-acetyl-D-glucosamine residues in chitodextrins.</text>
        <dbReference type="EC" id="3.2.1.17"/>
    </reaction>
</comment>
<comment type="biophysicochemical properties">
    <phDependence>
        <text evidence="3">Optimum pH is 6.0.</text>
    </phDependence>
    <temperatureDependence>
        <text evidence="3">Stable from 20 degrees Celsius to 70 degrees Celsius. Activity decreases sharply above 70 degrees Celsius.</text>
    </temperatureDependence>
</comment>
<comment type="subcellular location">
    <subcellularLocation>
        <location evidence="3">Secreted</location>
    </subcellularLocation>
</comment>
<comment type="tissue specificity">
    <text evidence="3">Expressed by the skin glands.</text>
</comment>
<comment type="similarity">
    <text evidence="2">Belongs to the glycosyl hydrolase 22 family.</text>
</comment>